<keyword id="KW-0067">ATP-binding</keyword>
<keyword id="KW-1003">Cell membrane</keyword>
<keyword id="KW-0472">Membrane</keyword>
<keyword id="KW-0547">Nucleotide-binding</keyword>
<keyword id="KW-1185">Reference proteome</keyword>
<keyword id="KW-0677">Repeat</keyword>
<keyword id="KW-0762">Sugar transport</keyword>
<keyword id="KW-1278">Translocase</keyword>
<keyword id="KW-0813">Transport</keyword>
<reference key="1">
    <citation type="journal article" date="2006" name="Proc. Natl. Acad. Sci. U.S.A.">
        <title>Comparative genomics of the lactic acid bacteria.</title>
        <authorList>
            <person name="Makarova K.S."/>
            <person name="Slesarev A."/>
            <person name="Wolf Y.I."/>
            <person name="Sorokin A."/>
            <person name="Mirkin B."/>
            <person name="Koonin E.V."/>
            <person name="Pavlov A."/>
            <person name="Pavlova N."/>
            <person name="Karamychev V."/>
            <person name="Polouchine N."/>
            <person name="Shakhova V."/>
            <person name="Grigoriev I."/>
            <person name="Lou Y."/>
            <person name="Rohksar D."/>
            <person name="Lucas S."/>
            <person name="Huang K."/>
            <person name="Goodstein D.M."/>
            <person name="Hawkins T."/>
            <person name="Plengvidhya V."/>
            <person name="Welker D."/>
            <person name="Hughes J."/>
            <person name="Goh Y."/>
            <person name="Benson A."/>
            <person name="Baldwin K."/>
            <person name="Lee J.-H."/>
            <person name="Diaz-Muniz I."/>
            <person name="Dosti B."/>
            <person name="Smeianov V."/>
            <person name="Wechter W."/>
            <person name="Barabote R."/>
            <person name="Lorca G."/>
            <person name="Altermann E."/>
            <person name="Barrangou R."/>
            <person name="Ganesan B."/>
            <person name="Xie Y."/>
            <person name="Rawsthorne H."/>
            <person name="Tamir D."/>
            <person name="Parker C."/>
            <person name="Breidt F."/>
            <person name="Broadbent J.R."/>
            <person name="Hutkins R."/>
            <person name="O'Sullivan D."/>
            <person name="Steele J."/>
            <person name="Unlu G."/>
            <person name="Saier M.H. Jr."/>
            <person name="Klaenhammer T."/>
            <person name="Richardson P."/>
            <person name="Kozyavkin S."/>
            <person name="Weimer B.C."/>
            <person name="Mills D.A."/>
        </authorList>
    </citation>
    <scope>NUCLEOTIDE SEQUENCE [LARGE SCALE GENOMIC DNA]</scope>
    <source>
        <strain>ATCC 334 / BCRC 17002 / CCUG 31169 / CIP 107868 / KCTC 3260 / NRRL B-441</strain>
    </source>
</reference>
<sequence>MKIEMKKITKSFGANRVLEGVDFTVESGEVHALMGENGAGKSTLMNILTGLYQANSGEILVDGQPTTYSGPMEAEQHGISFIHQEMNNFLEMSVVDNMFLNKELRTKFGLMDNKAMREQAAHYLSLLGAKLDVEQPIGNLSVGRQQMVEIAKSLMTDAKIIIMDEPTAALTETEIDQLFGVVRRLKEKGVGFIYISHRMEEIFEIADKVTVMRDGLSITEYATKDVTMKQLVKDMVGREIDDFYPDRTPDHGPVAMEVKGLTENGVFKDVSFTVHQGEILGFSGLMGAGRTEIMRAIFGIDKYQSGEILLDGKPVKIRDPQDAIRHNIGFLTENRKDEGLILEDSLHDNIVLPSIDGFVKHGLVDDKATDEFVRMLMKRLTVKAMGPDVSAGSLSGGNQQKVVLAKWIGSGSKVLILDEPTRGVDVGAKREIYDLMNELTDRHVAIIMISSDLPEVLGMSDRIAVVYEGKITGILDGKTATQESIMTLATGGVEEHAGAI</sequence>
<dbReference type="EC" id="7.5.2.7" evidence="1"/>
<dbReference type="EMBL" id="CP000423">
    <property type="protein sequence ID" value="ABJ69168.1"/>
    <property type="molecule type" value="Genomic_DNA"/>
</dbReference>
<dbReference type="RefSeq" id="WP_003563207.1">
    <property type="nucleotide sequence ID" value="NC_008526.1"/>
</dbReference>
<dbReference type="RefSeq" id="YP_805610.1">
    <property type="nucleotide sequence ID" value="NC_008526.1"/>
</dbReference>
<dbReference type="SMR" id="Q03CA4"/>
<dbReference type="STRING" id="321967.LSEI_0308"/>
<dbReference type="PaxDb" id="321967-LSEI_0308"/>
<dbReference type="KEGG" id="lca:LSEI_0308"/>
<dbReference type="PATRIC" id="fig|321967.11.peg.331"/>
<dbReference type="HOGENOM" id="CLU_000604_92_3_9"/>
<dbReference type="Proteomes" id="UP000001651">
    <property type="component" value="Chromosome"/>
</dbReference>
<dbReference type="GO" id="GO:0005886">
    <property type="term" value="C:plasma membrane"/>
    <property type="evidence" value="ECO:0007669"/>
    <property type="project" value="UniProtKB-SubCell"/>
</dbReference>
<dbReference type="GO" id="GO:0015611">
    <property type="term" value="F:ABC-type D-ribose transporter activity"/>
    <property type="evidence" value="ECO:0007669"/>
    <property type="project" value="UniProtKB-EC"/>
</dbReference>
<dbReference type="GO" id="GO:0005524">
    <property type="term" value="F:ATP binding"/>
    <property type="evidence" value="ECO:0007669"/>
    <property type="project" value="UniProtKB-KW"/>
</dbReference>
<dbReference type="GO" id="GO:0016887">
    <property type="term" value="F:ATP hydrolysis activity"/>
    <property type="evidence" value="ECO:0007669"/>
    <property type="project" value="InterPro"/>
</dbReference>
<dbReference type="CDD" id="cd03216">
    <property type="entry name" value="ABC_Carb_Monos_I"/>
    <property type="match status" value="1"/>
</dbReference>
<dbReference type="CDD" id="cd03215">
    <property type="entry name" value="ABC_Carb_Monos_II"/>
    <property type="match status" value="1"/>
</dbReference>
<dbReference type="FunFam" id="3.40.50.300:FF:000127">
    <property type="entry name" value="Ribose import ATP-binding protein RbsA"/>
    <property type="match status" value="1"/>
</dbReference>
<dbReference type="Gene3D" id="3.40.50.300">
    <property type="entry name" value="P-loop containing nucleotide triphosphate hydrolases"/>
    <property type="match status" value="2"/>
</dbReference>
<dbReference type="InterPro" id="IPR003593">
    <property type="entry name" value="AAA+_ATPase"/>
</dbReference>
<dbReference type="InterPro" id="IPR050107">
    <property type="entry name" value="ABC_carbohydrate_import_ATPase"/>
</dbReference>
<dbReference type="InterPro" id="IPR003439">
    <property type="entry name" value="ABC_transporter-like_ATP-bd"/>
</dbReference>
<dbReference type="InterPro" id="IPR017871">
    <property type="entry name" value="ABC_transporter-like_CS"/>
</dbReference>
<dbReference type="InterPro" id="IPR027417">
    <property type="entry name" value="P-loop_NTPase"/>
</dbReference>
<dbReference type="PANTHER" id="PTHR43790">
    <property type="entry name" value="CARBOHYDRATE TRANSPORT ATP-BINDING PROTEIN MG119-RELATED"/>
    <property type="match status" value="1"/>
</dbReference>
<dbReference type="PANTHER" id="PTHR43790:SF3">
    <property type="entry name" value="D-ALLOSE IMPORT ATP-BINDING PROTEIN ALSA-RELATED"/>
    <property type="match status" value="1"/>
</dbReference>
<dbReference type="Pfam" id="PF00005">
    <property type="entry name" value="ABC_tran"/>
    <property type="match status" value="2"/>
</dbReference>
<dbReference type="SMART" id="SM00382">
    <property type="entry name" value="AAA"/>
    <property type="match status" value="2"/>
</dbReference>
<dbReference type="SUPFAM" id="SSF52540">
    <property type="entry name" value="P-loop containing nucleoside triphosphate hydrolases"/>
    <property type="match status" value="2"/>
</dbReference>
<dbReference type="PROSITE" id="PS00211">
    <property type="entry name" value="ABC_TRANSPORTER_1"/>
    <property type="match status" value="1"/>
</dbReference>
<dbReference type="PROSITE" id="PS50893">
    <property type="entry name" value="ABC_TRANSPORTER_2"/>
    <property type="match status" value="2"/>
</dbReference>
<dbReference type="PROSITE" id="PS51254">
    <property type="entry name" value="RBSA"/>
    <property type="match status" value="1"/>
</dbReference>
<organism>
    <name type="scientific">Lacticaseibacillus paracasei (strain ATCC 334 / BCRC 17002 / CCUG 31169 / CIP 107868 / KCTC 3260 / NRRL B-441)</name>
    <name type="common">Lactobacillus paracasei</name>
    <dbReference type="NCBI Taxonomy" id="321967"/>
    <lineage>
        <taxon>Bacteria</taxon>
        <taxon>Bacillati</taxon>
        <taxon>Bacillota</taxon>
        <taxon>Bacilli</taxon>
        <taxon>Lactobacillales</taxon>
        <taxon>Lactobacillaceae</taxon>
        <taxon>Lacticaseibacillus</taxon>
    </lineage>
</organism>
<gene>
    <name evidence="1" type="primary">rbsA</name>
    <name type="ordered locus">LSEI_0308</name>
</gene>
<evidence type="ECO:0000255" key="1">
    <source>
        <dbReference type="HAMAP-Rule" id="MF_01716"/>
    </source>
</evidence>
<feature type="chain" id="PRO_0000277515" description="Ribose import ATP-binding protein RbsA">
    <location>
        <begin position="1"/>
        <end position="500"/>
    </location>
</feature>
<feature type="domain" description="ABC transporter 1" evidence="1">
    <location>
        <begin position="3"/>
        <end position="239"/>
    </location>
</feature>
<feature type="domain" description="ABC transporter 2" evidence="1">
    <location>
        <begin position="246"/>
        <end position="493"/>
    </location>
</feature>
<feature type="binding site" evidence="1">
    <location>
        <begin position="35"/>
        <end position="42"/>
    </location>
    <ligand>
        <name>ATP</name>
        <dbReference type="ChEBI" id="CHEBI:30616"/>
    </ligand>
</feature>
<name>RBSA_LACP3</name>
<proteinExistence type="inferred from homology"/>
<comment type="function">
    <text evidence="1">Part of the ABC transporter complex RbsABC involved in ribose import. Responsible for energy coupling to the transport system.</text>
</comment>
<comment type="catalytic activity">
    <reaction evidence="1">
        <text>D-ribose(out) + ATP + H2O = D-ribose(in) + ADP + phosphate + H(+)</text>
        <dbReference type="Rhea" id="RHEA:29903"/>
        <dbReference type="ChEBI" id="CHEBI:15377"/>
        <dbReference type="ChEBI" id="CHEBI:15378"/>
        <dbReference type="ChEBI" id="CHEBI:30616"/>
        <dbReference type="ChEBI" id="CHEBI:43474"/>
        <dbReference type="ChEBI" id="CHEBI:47013"/>
        <dbReference type="ChEBI" id="CHEBI:456216"/>
        <dbReference type="EC" id="7.5.2.7"/>
    </reaction>
</comment>
<comment type="subunit">
    <text evidence="1">The complex is composed of an ATP-binding protein (RbsA), two transmembrane proteins (RbsC) and a solute-binding protein (RbsB).</text>
</comment>
<comment type="subcellular location">
    <subcellularLocation>
        <location evidence="1">Cell membrane</location>
        <topology evidence="1">Peripheral membrane protein</topology>
    </subcellularLocation>
</comment>
<comment type="similarity">
    <text evidence="1">Belongs to the ABC transporter superfamily. Ribose importer (TC 3.A.1.2.1) family.</text>
</comment>
<accession>Q03CA4</accession>
<protein>
    <recommendedName>
        <fullName evidence="1">Ribose import ATP-binding protein RbsA</fullName>
        <ecNumber evidence="1">7.5.2.7</ecNumber>
    </recommendedName>
</protein>